<proteinExistence type="inferred from homology"/>
<dbReference type="EC" id="2.7.1.170" evidence="1"/>
<dbReference type="EMBL" id="AE016825">
    <property type="protein sequence ID" value="AAQ60149.1"/>
    <property type="status" value="ALT_INIT"/>
    <property type="molecule type" value="Genomic_DNA"/>
</dbReference>
<dbReference type="RefSeq" id="WP_043596192.1">
    <property type="nucleotide sequence ID" value="NC_005085.1"/>
</dbReference>
<dbReference type="SMR" id="Q7NV67"/>
<dbReference type="STRING" id="243365.CV_2478"/>
<dbReference type="KEGG" id="cvi:CV_2478"/>
<dbReference type="eggNOG" id="COG2377">
    <property type="taxonomic scope" value="Bacteria"/>
</dbReference>
<dbReference type="HOGENOM" id="CLU_038782_0_0_4"/>
<dbReference type="OrthoDB" id="9763949at2"/>
<dbReference type="UniPathway" id="UPA00343"/>
<dbReference type="UniPathway" id="UPA00544"/>
<dbReference type="Proteomes" id="UP000001424">
    <property type="component" value="Chromosome"/>
</dbReference>
<dbReference type="GO" id="GO:0005524">
    <property type="term" value="F:ATP binding"/>
    <property type="evidence" value="ECO:0007669"/>
    <property type="project" value="UniProtKB-UniRule"/>
</dbReference>
<dbReference type="GO" id="GO:0016301">
    <property type="term" value="F:kinase activity"/>
    <property type="evidence" value="ECO:0007669"/>
    <property type="project" value="UniProtKB-KW"/>
</dbReference>
<dbReference type="GO" id="GO:0016773">
    <property type="term" value="F:phosphotransferase activity, alcohol group as acceptor"/>
    <property type="evidence" value="ECO:0007669"/>
    <property type="project" value="UniProtKB-UniRule"/>
</dbReference>
<dbReference type="GO" id="GO:0097175">
    <property type="term" value="P:1,6-anhydro-N-acetyl-beta-muramic acid catabolic process"/>
    <property type="evidence" value="ECO:0007669"/>
    <property type="project" value="UniProtKB-UniRule"/>
</dbReference>
<dbReference type="GO" id="GO:0006040">
    <property type="term" value="P:amino sugar metabolic process"/>
    <property type="evidence" value="ECO:0007669"/>
    <property type="project" value="InterPro"/>
</dbReference>
<dbReference type="GO" id="GO:0009254">
    <property type="term" value="P:peptidoglycan turnover"/>
    <property type="evidence" value="ECO:0007669"/>
    <property type="project" value="UniProtKB-UniRule"/>
</dbReference>
<dbReference type="CDD" id="cd24050">
    <property type="entry name" value="ASKHA_NBD_ANMK"/>
    <property type="match status" value="1"/>
</dbReference>
<dbReference type="Gene3D" id="3.30.420.40">
    <property type="match status" value="2"/>
</dbReference>
<dbReference type="HAMAP" id="MF_01270">
    <property type="entry name" value="AnhMurNAc_kinase"/>
    <property type="match status" value="1"/>
</dbReference>
<dbReference type="InterPro" id="IPR005338">
    <property type="entry name" value="Anhydro_N_Ac-Mur_kinase"/>
</dbReference>
<dbReference type="InterPro" id="IPR043129">
    <property type="entry name" value="ATPase_NBD"/>
</dbReference>
<dbReference type="NCBIfam" id="NF007139">
    <property type="entry name" value="PRK09585.1-3"/>
    <property type="match status" value="1"/>
</dbReference>
<dbReference type="PANTHER" id="PTHR30605">
    <property type="entry name" value="ANHYDRO-N-ACETYLMURAMIC ACID KINASE"/>
    <property type="match status" value="1"/>
</dbReference>
<dbReference type="PANTHER" id="PTHR30605:SF0">
    <property type="entry name" value="ANHYDRO-N-ACETYLMURAMIC ACID KINASE"/>
    <property type="match status" value="1"/>
</dbReference>
<dbReference type="Pfam" id="PF03702">
    <property type="entry name" value="AnmK"/>
    <property type="match status" value="1"/>
</dbReference>
<dbReference type="SUPFAM" id="SSF53067">
    <property type="entry name" value="Actin-like ATPase domain"/>
    <property type="match status" value="1"/>
</dbReference>
<organism>
    <name type="scientific">Chromobacterium violaceum (strain ATCC 12472 / DSM 30191 / JCM 1249 / CCUG 213 / NBRC 12614 / NCIMB 9131 / NCTC 9757 / MK)</name>
    <dbReference type="NCBI Taxonomy" id="243365"/>
    <lineage>
        <taxon>Bacteria</taxon>
        <taxon>Pseudomonadati</taxon>
        <taxon>Pseudomonadota</taxon>
        <taxon>Betaproteobacteria</taxon>
        <taxon>Neisseriales</taxon>
        <taxon>Chromobacteriaceae</taxon>
        <taxon>Chromobacterium</taxon>
    </lineage>
</organism>
<protein>
    <recommendedName>
        <fullName evidence="1">Anhydro-N-acetylmuramic acid kinase</fullName>
        <ecNumber evidence="1">2.7.1.170</ecNumber>
    </recommendedName>
    <alternativeName>
        <fullName evidence="1">AnhMurNAc kinase</fullName>
    </alternativeName>
</protein>
<accession>Q7NV67</accession>
<reference key="1">
    <citation type="journal article" date="2003" name="Proc. Natl. Acad. Sci. U.S.A.">
        <title>The complete genome sequence of Chromobacterium violaceum reveals remarkable and exploitable bacterial adaptability.</title>
        <authorList>
            <person name="Vasconcelos A.T.R."/>
            <person name="de Almeida D.F."/>
            <person name="Hungria M."/>
            <person name="Guimaraes C.T."/>
            <person name="Antonio R.V."/>
            <person name="Almeida F.C."/>
            <person name="de Almeida L.G.P."/>
            <person name="de Almeida R."/>
            <person name="Alves-Gomes J.A."/>
            <person name="Andrade E.M."/>
            <person name="Araripe J."/>
            <person name="de Araujo M.F.F."/>
            <person name="Astolfi-Filho S."/>
            <person name="Azevedo V."/>
            <person name="Baptista A.J."/>
            <person name="Bataus L.A.M."/>
            <person name="Batista J.S."/>
            <person name="Belo A."/>
            <person name="van den Berg C."/>
            <person name="Bogo M."/>
            <person name="Bonatto S."/>
            <person name="Bordignon J."/>
            <person name="Brigido M.M."/>
            <person name="Brito C.A."/>
            <person name="Brocchi M."/>
            <person name="Burity H.A."/>
            <person name="Camargo A.A."/>
            <person name="Cardoso D.D.P."/>
            <person name="Carneiro N.P."/>
            <person name="Carraro D.M."/>
            <person name="Carvalho C.M.B."/>
            <person name="Cascardo J.C.M."/>
            <person name="Cavada B.S."/>
            <person name="Chueire L.M.O."/>
            <person name="Creczynski-Pasa T.B."/>
            <person name="Cunha-Junior N.C."/>
            <person name="Fagundes N."/>
            <person name="Falcao C.L."/>
            <person name="Fantinatti F."/>
            <person name="Farias I.P."/>
            <person name="Felipe M.S.S."/>
            <person name="Ferrari L.P."/>
            <person name="Ferro J.A."/>
            <person name="Ferro M.I.T."/>
            <person name="Franco G.R."/>
            <person name="Freitas N.S.A."/>
            <person name="Furlan L.R."/>
            <person name="Gazzinelli R.T."/>
            <person name="Gomes E.A."/>
            <person name="Goncalves P.R."/>
            <person name="Grangeiro T.B."/>
            <person name="Grattapaglia D."/>
            <person name="Grisard E.C."/>
            <person name="Hanna E.S."/>
            <person name="Jardim S.N."/>
            <person name="Laurino J."/>
            <person name="Leoi L.C.T."/>
            <person name="Lima L.F.A."/>
            <person name="Loureiro M.F."/>
            <person name="Lyra M.C.C.P."/>
            <person name="Madeira H.M.F."/>
            <person name="Manfio G.P."/>
            <person name="Maranhao A.Q."/>
            <person name="Martins W.S."/>
            <person name="di Mauro S.M.Z."/>
            <person name="de Medeiros S.R.B."/>
            <person name="Meissner R.V."/>
            <person name="Moreira M.A.M."/>
            <person name="Nascimento F.F."/>
            <person name="Nicolas M.F."/>
            <person name="Oliveira J.G."/>
            <person name="Oliveira S.C."/>
            <person name="Paixao R.F.C."/>
            <person name="Parente J.A."/>
            <person name="Pedrosa F.O."/>
            <person name="Pena S.D.J."/>
            <person name="Pereira J.O."/>
            <person name="Pereira M."/>
            <person name="Pinto L.S.R.C."/>
            <person name="Pinto L.S."/>
            <person name="Porto J.I.R."/>
            <person name="Potrich D.P."/>
            <person name="Ramalho-Neto C.E."/>
            <person name="Reis A.M.M."/>
            <person name="Rigo L.U."/>
            <person name="Rondinelli E."/>
            <person name="Santos E.B.P."/>
            <person name="Santos F.R."/>
            <person name="Schneider M.P.C."/>
            <person name="Seuanez H.N."/>
            <person name="Silva A.M.R."/>
            <person name="da Silva A.L.C."/>
            <person name="Silva D.W."/>
            <person name="Silva R."/>
            <person name="Simoes I.C."/>
            <person name="Simon D."/>
            <person name="Soares C.M.A."/>
            <person name="Soares R.B.A."/>
            <person name="Souza E.M."/>
            <person name="Souza K.R.L."/>
            <person name="Souza R.C."/>
            <person name="Steffens M.B.R."/>
            <person name="Steindel M."/>
            <person name="Teixeira S.R."/>
            <person name="Urmenyi T."/>
            <person name="Vettore A."/>
            <person name="Wassem R."/>
            <person name="Zaha A."/>
            <person name="Simpson A.J.G."/>
        </authorList>
    </citation>
    <scope>NUCLEOTIDE SEQUENCE [LARGE SCALE GENOMIC DNA]</scope>
    <source>
        <strain>ATCC 12472 / DSM 30191 / JCM 1249 / CCUG 213 / NBRC 12614 / NCIMB 9131 / NCTC 9757 / MK</strain>
    </source>
</reference>
<comment type="function">
    <text evidence="1">Catalyzes the specific phosphorylation of 1,6-anhydro-N-acetylmuramic acid (anhMurNAc) with the simultaneous cleavage of the 1,6-anhydro ring, generating MurNAc-6-P. Is required for the utilization of anhMurNAc either imported from the medium or derived from its own cell wall murein, and thus plays a role in cell wall recycling.</text>
</comment>
<comment type="catalytic activity">
    <reaction evidence="1">
        <text>1,6-anhydro-N-acetyl-beta-muramate + ATP + H2O = N-acetyl-D-muramate 6-phosphate + ADP + H(+)</text>
        <dbReference type="Rhea" id="RHEA:24952"/>
        <dbReference type="ChEBI" id="CHEBI:15377"/>
        <dbReference type="ChEBI" id="CHEBI:15378"/>
        <dbReference type="ChEBI" id="CHEBI:30616"/>
        <dbReference type="ChEBI" id="CHEBI:58690"/>
        <dbReference type="ChEBI" id="CHEBI:58722"/>
        <dbReference type="ChEBI" id="CHEBI:456216"/>
        <dbReference type="EC" id="2.7.1.170"/>
    </reaction>
</comment>
<comment type="pathway">
    <text evidence="1">Amino-sugar metabolism; 1,6-anhydro-N-acetylmuramate degradation.</text>
</comment>
<comment type="pathway">
    <text evidence="1">Cell wall biogenesis; peptidoglycan recycling.</text>
</comment>
<comment type="similarity">
    <text evidence="1">Belongs to the anhydro-N-acetylmuramic acid kinase family.</text>
</comment>
<comment type="sequence caution" evidence="2">
    <conflict type="erroneous initiation">
        <sequence resource="EMBL-CDS" id="AAQ60149"/>
    </conflict>
</comment>
<feature type="chain" id="PRO_0000249992" description="Anhydro-N-acetylmuramic acid kinase">
    <location>
        <begin position="1"/>
        <end position="367"/>
    </location>
</feature>
<feature type="binding site" evidence="1">
    <location>
        <begin position="11"/>
        <end position="18"/>
    </location>
    <ligand>
        <name>ATP</name>
        <dbReference type="ChEBI" id="CHEBI:30616"/>
    </ligand>
</feature>
<gene>
    <name evidence="1" type="primary">anmK</name>
    <name type="ordered locus">CV_2478</name>
</gene>
<evidence type="ECO:0000255" key="1">
    <source>
        <dbReference type="HAMAP-Rule" id="MF_01270"/>
    </source>
</evidence>
<evidence type="ECO:0000305" key="2"/>
<sequence length="367" mass="38957">MTDLYIGMMSGTSLDGVDAVLVRFDDAGRPEPQADHVVPYPDAVKQAVLALQPRGHDELHRAQTLANRLAEIYAQAARELLQKSGRRAEDIRAIACHGQTVRHAPHDGYTVQIGNMAKLAELAGIDVIADFRSRDVAAGGHGAPLVPAFQQGAFSSPDEKRVILNIGGISNIARLHAGQEAIGFDCGPGNMLMDAWCLRHTGQPFDEDGNWAAGGAVHPPLLAAMLAEPYLTQPPPKSTGRDLFDDEWLAGKLGALPSAPPPRDVQATLLAFSARGIADAILEHCPGNQAVYVCGGGARNGALMAEIARQLPGQRVAAIEALGLPAQLIEAIAFAWLGWRFDRRQAGNLPSVTGAQGPRVLGALYPR</sequence>
<keyword id="KW-0067">ATP-binding</keyword>
<keyword id="KW-0119">Carbohydrate metabolism</keyword>
<keyword id="KW-0418">Kinase</keyword>
<keyword id="KW-0547">Nucleotide-binding</keyword>
<keyword id="KW-1185">Reference proteome</keyword>
<keyword id="KW-0808">Transferase</keyword>
<name>ANMK_CHRVO</name>